<sequence>MATSRYEPVAEIGVGAYGTVYKARDPHSGHFVALKSVRVPNGGGAGGGLPISTVREVALLRRLEAFEHPNVVRLMDVCATARTDRETKVTLVFEHVDQDLRTYLDKAPPPGLPVETIKDLMRQFLRGLDFLHANCIVHRDLKPENILVTSGGTVKLADFGLARIYSYQMALTPVVVTLWYRAPEVLLQSTYATPVDMWSVGCIFAEMFRRKPLFCGNSEADQLGKIFDLIGLPPEDDWPRDVSLPRGAFSPRGPRPVQSVVPELEESGAQLLLEMLTFNPHKRISAFRALQHSYLHKAEGDAE</sequence>
<reference key="1">
    <citation type="submission" date="2005-11" db="EMBL/GenBank/DDBJ databases">
        <authorList>
            <consortium name="NIH - Mammalian Gene Collection (MGC) project"/>
        </authorList>
    </citation>
    <scope>NUCLEOTIDE SEQUENCE [LARGE SCALE MRNA]</scope>
    <source>
        <strain>Crossbred X Angus</strain>
        <tissue>Liver</tissue>
    </source>
</reference>
<keyword id="KW-0007">Acetylation</keyword>
<keyword id="KW-0067">ATP-binding</keyword>
<keyword id="KW-0131">Cell cycle</keyword>
<keyword id="KW-0132">Cell division</keyword>
<keyword id="KW-0963">Cytoplasm</keyword>
<keyword id="KW-0418">Kinase</keyword>
<keyword id="KW-0472">Membrane</keyword>
<keyword id="KW-0547">Nucleotide-binding</keyword>
<keyword id="KW-0539">Nucleus</keyword>
<keyword id="KW-0597">Phosphoprotein</keyword>
<keyword id="KW-0656">Proto-oncogene</keyword>
<keyword id="KW-1185">Reference proteome</keyword>
<keyword id="KW-0723">Serine/threonine-protein kinase</keyword>
<keyword id="KW-0808">Transferase</keyword>
<accession>Q32KY4</accession>
<gene>
    <name type="primary">CDK4</name>
</gene>
<protein>
    <recommendedName>
        <fullName>Cyclin-dependent kinase 4</fullName>
        <ecNumber>2.7.11.22</ecNumber>
    </recommendedName>
    <alternativeName>
        <fullName>Cell division protein kinase 4</fullName>
    </alternativeName>
</protein>
<dbReference type="EC" id="2.7.11.22"/>
<dbReference type="EMBL" id="BC109858">
    <property type="protein sequence ID" value="AAI09859.1"/>
    <property type="molecule type" value="mRNA"/>
</dbReference>
<dbReference type="RefSeq" id="NP_001032683.1">
    <property type="nucleotide sequence ID" value="NM_001037594.2"/>
</dbReference>
<dbReference type="RefSeq" id="XP_005206610.1">
    <property type="nucleotide sequence ID" value="XM_005206553.5"/>
</dbReference>
<dbReference type="SMR" id="Q32KY4"/>
<dbReference type="BioGRID" id="167251">
    <property type="interactions" value="1"/>
</dbReference>
<dbReference type="FunCoup" id="Q32KY4">
    <property type="interactions" value="2388"/>
</dbReference>
<dbReference type="STRING" id="9913.ENSBTAP00000071543"/>
<dbReference type="PaxDb" id="9913-ENSBTAP00000009420"/>
<dbReference type="Ensembl" id="ENSBTAT00000009420.3">
    <property type="protein sequence ID" value="ENSBTAP00000009420.2"/>
    <property type="gene ID" value="ENSBTAG00000007160.5"/>
</dbReference>
<dbReference type="GeneID" id="510618"/>
<dbReference type="KEGG" id="bta:510618"/>
<dbReference type="CTD" id="1019"/>
<dbReference type="VEuPathDB" id="HostDB:ENSBTAG00000007160"/>
<dbReference type="VGNC" id="VGNC:111241">
    <property type="gene designation" value="CDK4"/>
</dbReference>
<dbReference type="eggNOG" id="KOG0594">
    <property type="taxonomic scope" value="Eukaryota"/>
</dbReference>
<dbReference type="GeneTree" id="ENSGT00940000154770"/>
<dbReference type="HOGENOM" id="CLU_000288_181_1_1"/>
<dbReference type="InParanoid" id="Q32KY4"/>
<dbReference type="OMA" id="KNFPPLM"/>
<dbReference type="OrthoDB" id="1732493at2759"/>
<dbReference type="TreeFam" id="TF101022"/>
<dbReference type="Reactome" id="R-BTA-187577">
    <property type="pathway name" value="SCF(Skp2)-mediated degradation of p27/p21"/>
</dbReference>
<dbReference type="Reactome" id="R-BTA-2559580">
    <property type="pathway name" value="Oxidative Stress Induced Senescence"/>
</dbReference>
<dbReference type="Reactome" id="R-BTA-2559582">
    <property type="pathway name" value="Senescence-Associated Secretory Phenotype (SASP)"/>
</dbReference>
<dbReference type="Reactome" id="R-BTA-2559585">
    <property type="pathway name" value="Oncogene Induced Senescence"/>
</dbReference>
<dbReference type="Reactome" id="R-BTA-3214858">
    <property type="pathway name" value="RMTs methylate histone arginines"/>
</dbReference>
<dbReference type="Reactome" id="R-BTA-69231">
    <property type="pathway name" value="Cyclin D associated events in G1"/>
</dbReference>
<dbReference type="Reactome" id="R-BTA-75815">
    <property type="pathway name" value="Ubiquitin-dependent degradation of Cyclin D"/>
</dbReference>
<dbReference type="Reactome" id="R-BTA-8849470">
    <property type="pathway name" value="PTK6 Regulates Cell Cycle"/>
</dbReference>
<dbReference type="Reactome" id="R-BTA-8878166">
    <property type="pathway name" value="Transcriptional regulation by RUNX2"/>
</dbReference>
<dbReference type="Reactome" id="R-BTA-9754119">
    <property type="pathway name" value="Drug-mediated inhibition of CDK4/CDK6 activity"/>
</dbReference>
<dbReference type="Proteomes" id="UP000009136">
    <property type="component" value="Chromosome 5"/>
</dbReference>
<dbReference type="Bgee" id="ENSBTAG00000007160">
    <property type="expression patterns" value="Expressed in uterine cervix and 106 other cell types or tissues"/>
</dbReference>
<dbReference type="GO" id="GO:0000307">
    <property type="term" value="C:cyclin-dependent protein kinase holoenzyme complex"/>
    <property type="evidence" value="ECO:0000318"/>
    <property type="project" value="GO_Central"/>
</dbReference>
<dbReference type="GO" id="GO:0005737">
    <property type="term" value="C:cytoplasm"/>
    <property type="evidence" value="ECO:0000318"/>
    <property type="project" value="GO_Central"/>
</dbReference>
<dbReference type="GO" id="GO:0031965">
    <property type="term" value="C:nuclear membrane"/>
    <property type="evidence" value="ECO:0007669"/>
    <property type="project" value="UniProtKB-SubCell"/>
</dbReference>
<dbReference type="GO" id="GO:0005634">
    <property type="term" value="C:nucleus"/>
    <property type="evidence" value="ECO:0000250"/>
    <property type="project" value="UniProtKB"/>
</dbReference>
<dbReference type="GO" id="GO:0005524">
    <property type="term" value="F:ATP binding"/>
    <property type="evidence" value="ECO:0007669"/>
    <property type="project" value="UniProtKB-KW"/>
</dbReference>
<dbReference type="GO" id="GO:0030332">
    <property type="term" value="F:cyclin binding"/>
    <property type="evidence" value="ECO:0000318"/>
    <property type="project" value="GO_Central"/>
</dbReference>
<dbReference type="GO" id="GO:0004693">
    <property type="term" value="F:cyclin-dependent protein serine/threonine kinase activity"/>
    <property type="evidence" value="ECO:0000318"/>
    <property type="project" value="GO_Central"/>
</dbReference>
<dbReference type="GO" id="GO:0106310">
    <property type="term" value="F:protein serine kinase activity"/>
    <property type="evidence" value="ECO:0007669"/>
    <property type="project" value="RHEA"/>
</dbReference>
<dbReference type="GO" id="GO:0051301">
    <property type="term" value="P:cell division"/>
    <property type="evidence" value="ECO:0007669"/>
    <property type="project" value="UniProtKB-KW"/>
</dbReference>
<dbReference type="GO" id="GO:0000082">
    <property type="term" value="P:G1/S transition of mitotic cell cycle"/>
    <property type="evidence" value="ECO:0000318"/>
    <property type="project" value="GO_Central"/>
</dbReference>
<dbReference type="GO" id="GO:0010971">
    <property type="term" value="P:positive regulation of G2/M transition of mitotic cell cycle"/>
    <property type="evidence" value="ECO:0000250"/>
    <property type="project" value="UniProtKB"/>
</dbReference>
<dbReference type="GO" id="GO:0010389">
    <property type="term" value="P:regulation of G2/M transition of mitotic cell cycle"/>
    <property type="evidence" value="ECO:0000318"/>
    <property type="project" value="GO_Central"/>
</dbReference>
<dbReference type="GO" id="GO:0010468">
    <property type="term" value="P:regulation of gene expression"/>
    <property type="evidence" value="ECO:0000318"/>
    <property type="project" value="GO_Central"/>
</dbReference>
<dbReference type="GO" id="GO:0007165">
    <property type="term" value="P:signal transduction"/>
    <property type="evidence" value="ECO:0000318"/>
    <property type="project" value="GO_Central"/>
</dbReference>
<dbReference type="CDD" id="cd07863">
    <property type="entry name" value="STKc_CDK4"/>
    <property type="match status" value="1"/>
</dbReference>
<dbReference type="FunFam" id="3.30.200.20:FF:000124">
    <property type="entry name" value="Cyclin-dependent kinase 4"/>
    <property type="match status" value="1"/>
</dbReference>
<dbReference type="FunFam" id="1.10.510.10:FF:000205">
    <property type="entry name" value="Cyclin-dependent kinase 6"/>
    <property type="match status" value="1"/>
</dbReference>
<dbReference type="Gene3D" id="3.30.200.20">
    <property type="entry name" value="Phosphorylase Kinase, domain 1"/>
    <property type="match status" value="1"/>
</dbReference>
<dbReference type="Gene3D" id="1.10.510.10">
    <property type="entry name" value="Transferase(Phosphotransferase) domain 1"/>
    <property type="match status" value="1"/>
</dbReference>
<dbReference type="InterPro" id="IPR050108">
    <property type="entry name" value="CDK"/>
</dbReference>
<dbReference type="InterPro" id="IPR011009">
    <property type="entry name" value="Kinase-like_dom_sf"/>
</dbReference>
<dbReference type="InterPro" id="IPR000719">
    <property type="entry name" value="Prot_kinase_dom"/>
</dbReference>
<dbReference type="InterPro" id="IPR017441">
    <property type="entry name" value="Protein_kinase_ATP_BS"/>
</dbReference>
<dbReference type="InterPro" id="IPR008271">
    <property type="entry name" value="Ser/Thr_kinase_AS"/>
</dbReference>
<dbReference type="PANTHER" id="PTHR24056">
    <property type="entry name" value="CELL DIVISION PROTEIN KINASE"/>
    <property type="match status" value="1"/>
</dbReference>
<dbReference type="PANTHER" id="PTHR24056:SF129">
    <property type="entry name" value="CYCLIN-DEPENDENT KINASE 4"/>
    <property type="match status" value="1"/>
</dbReference>
<dbReference type="Pfam" id="PF00069">
    <property type="entry name" value="Pkinase"/>
    <property type="match status" value="1"/>
</dbReference>
<dbReference type="SMART" id="SM00220">
    <property type="entry name" value="S_TKc"/>
    <property type="match status" value="1"/>
</dbReference>
<dbReference type="SUPFAM" id="SSF56112">
    <property type="entry name" value="Protein kinase-like (PK-like)"/>
    <property type="match status" value="1"/>
</dbReference>
<dbReference type="PROSITE" id="PS00107">
    <property type="entry name" value="PROTEIN_KINASE_ATP"/>
    <property type="match status" value="1"/>
</dbReference>
<dbReference type="PROSITE" id="PS50011">
    <property type="entry name" value="PROTEIN_KINASE_DOM"/>
    <property type="match status" value="1"/>
</dbReference>
<dbReference type="PROSITE" id="PS00108">
    <property type="entry name" value="PROTEIN_KINASE_ST"/>
    <property type="match status" value="1"/>
</dbReference>
<organism>
    <name type="scientific">Bos taurus</name>
    <name type="common">Bovine</name>
    <dbReference type="NCBI Taxonomy" id="9913"/>
    <lineage>
        <taxon>Eukaryota</taxon>
        <taxon>Metazoa</taxon>
        <taxon>Chordata</taxon>
        <taxon>Craniata</taxon>
        <taxon>Vertebrata</taxon>
        <taxon>Euteleostomi</taxon>
        <taxon>Mammalia</taxon>
        <taxon>Eutheria</taxon>
        <taxon>Laurasiatheria</taxon>
        <taxon>Artiodactyla</taxon>
        <taxon>Ruminantia</taxon>
        <taxon>Pecora</taxon>
        <taxon>Bovidae</taxon>
        <taxon>Bovinae</taxon>
        <taxon>Bos</taxon>
    </lineage>
</organism>
<proteinExistence type="evidence at transcript level"/>
<evidence type="ECO:0000250" key="1"/>
<evidence type="ECO:0000250" key="2">
    <source>
        <dbReference type="UniProtKB" id="P11802"/>
    </source>
</evidence>
<evidence type="ECO:0000250" key="3">
    <source>
        <dbReference type="UniProtKB" id="P30285"/>
    </source>
</evidence>
<evidence type="ECO:0000255" key="4">
    <source>
        <dbReference type="PROSITE-ProRule" id="PRU00159"/>
    </source>
</evidence>
<evidence type="ECO:0000255" key="5">
    <source>
        <dbReference type="PROSITE-ProRule" id="PRU10027"/>
    </source>
</evidence>
<evidence type="ECO:0000305" key="6"/>
<name>CDK4_BOVIN</name>
<feature type="initiator methionine" description="Removed" evidence="2">
    <location>
        <position position="1"/>
    </location>
</feature>
<feature type="chain" id="PRO_0000282334" description="Cyclin-dependent kinase 4">
    <location>
        <begin position="2"/>
        <end position="303"/>
    </location>
</feature>
<feature type="domain" description="Protein kinase" evidence="4">
    <location>
        <begin position="6"/>
        <end position="295"/>
    </location>
</feature>
<feature type="region of interest" description="Required for binding D-type cyclins" evidence="1">
    <location>
        <begin position="50"/>
        <end position="56"/>
    </location>
</feature>
<feature type="active site" description="Proton acceptor" evidence="4 5">
    <location>
        <position position="140"/>
    </location>
</feature>
<feature type="binding site" evidence="4">
    <location>
        <begin position="12"/>
        <end position="20"/>
    </location>
    <ligand>
        <name>ATP</name>
        <dbReference type="ChEBI" id="CHEBI:30616"/>
    </ligand>
</feature>
<feature type="binding site" evidence="4">
    <location>
        <position position="35"/>
    </location>
    <ligand>
        <name>ATP</name>
        <dbReference type="ChEBI" id="CHEBI:30616"/>
    </ligand>
</feature>
<feature type="modified residue" description="N-acetylalanine" evidence="2">
    <location>
        <position position="2"/>
    </location>
</feature>
<feature type="modified residue" description="Phosphothreonine; by CAK" evidence="3">
    <location>
        <position position="172"/>
    </location>
</feature>
<comment type="function">
    <text evidence="2">Ser/Thr-kinase component of cyclin D-CDK4 (DC) complexes that phosphorylate and inhibit members of the retinoblastoma (RB) protein family including RB1 and regulate the cell-cycle during G(1)/S transition. Phosphorylation of RB1 allows dissociation of the transcription factor E2F from the RB/E2F complexes and the subsequent transcription of E2F target genes which are responsible for the progression through the G(1) phase. Hypophosphorylates RB1 in early G(1) phase. Cyclin D-CDK4 complexes are major integrators of various mitogenenic and antimitogenic signals. Also phosphorylates SMAD3 in a cell-cycle-dependent manner and represses its transcriptional activity. Component of the ternary complex, cyclin D/CDK4/CDKN1B, required for nuclear translocation and activity of the cyclin D-CDK4 complex (By similarity).</text>
</comment>
<comment type="catalytic activity">
    <reaction>
        <text>L-seryl-[protein] + ATP = O-phospho-L-seryl-[protein] + ADP + H(+)</text>
        <dbReference type="Rhea" id="RHEA:17989"/>
        <dbReference type="Rhea" id="RHEA-COMP:9863"/>
        <dbReference type="Rhea" id="RHEA-COMP:11604"/>
        <dbReference type="ChEBI" id="CHEBI:15378"/>
        <dbReference type="ChEBI" id="CHEBI:29999"/>
        <dbReference type="ChEBI" id="CHEBI:30616"/>
        <dbReference type="ChEBI" id="CHEBI:83421"/>
        <dbReference type="ChEBI" id="CHEBI:456216"/>
        <dbReference type="EC" id="2.7.11.22"/>
    </reaction>
</comment>
<comment type="catalytic activity">
    <reaction>
        <text>L-threonyl-[protein] + ATP = O-phospho-L-threonyl-[protein] + ADP + H(+)</text>
        <dbReference type="Rhea" id="RHEA:46608"/>
        <dbReference type="Rhea" id="RHEA-COMP:11060"/>
        <dbReference type="Rhea" id="RHEA-COMP:11605"/>
        <dbReference type="ChEBI" id="CHEBI:15378"/>
        <dbReference type="ChEBI" id="CHEBI:30013"/>
        <dbReference type="ChEBI" id="CHEBI:30616"/>
        <dbReference type="ChEBI" id="CHEBI:61977"/>
        <dbReference type="ChEBI" id="CHEBI:456216"/>
        <dbReference type="EC" id="2.7.11.22"/>
    </reaction>
</comment>
<comment type="activity regulation">
    <text evidence="2">Both phosphorylation at Thr-172 and binding of a D-type cyclin are necessary for enzymatic activity. Full activation of the cyclin-D-CDK4 complex appears to require other factors such as recruitment of the substrate via a substrate recruitment motif, and/or formation of the CDKN1B ternary complex. Inhibited by INK4 family members. In resting cells, the non-tyrosine-phosphorylated form of CDKN1B prevents phosphorylation at Thr-172 and inactivation, while, in proliferating cells, tyrosine phosphorylation of CDKN1B allows phosphorylation of Thr-172 of CDK4 and subsequent activation.</text>
</comment>
<comment type="subunit">
    <text evidence="2 3">Component of the D-CDK4 complex, composed of CDK4 and some D-type G1 cyclin (CCND1, CCND2 or CCND3). Interacts directly in the complex with CCND1, CCND2 or CCND3. Interacts with SEI1 and ZNF655. Forms a ternary complex, cyclin D-CDK4-CDKN1B, involved in modulating CDK4 enzymatic activity. Interacts directly with CDKN1B (phosphorylated on 'Tyr-88' and 'Tyr-89'); the interaction allows assembly of the cyclin D-CDK4 complex, Thr-172 phosphorylation, nuclear translocation and enhances the cyclin D-CDK4 complex activity. CDK4 activity is either inhibited or enhanced depending on stoichiometry of complex. The non-tyrosine-phosphorylated form of CDKN1B prevents T-loop phosphorylation of CDK4 producing inactive CDK4. Interacts (unphosphorylated form) with CDK2. Also forms ternary complexes with CDKN1A or CDKN2A. Interacts directly with CDKN1A (via its N-terminal); the interaction promotes the assembly of the cyclin D-CDK4 complex, its nuclear translocation and promotes the cyclin D-dependent enzyme activity of CDK4. Interacts with CCND1; the interaction is prevented with the binding of CCND1 to INSM1 during cell cycle progression. Probably forms a complex composed of chaperones HSP90 and HSP70, co-chaperones CDC37, PPP5C, TSC1 and client protein TSC2, CDK4, AKT, RAF1 and NR3C1; this complex does not contain co-chaperones STIP1/HOP and PTGES3/p23. Interacts with CEBPA (when phosphorylated). Interacts with FNIP1 and FNIP2.</text>
</comment>
<comment type="subcellular location">
    <subcellularLocation>
        <location evidence="2">Cytoplasm</location>
    </subcellularLocation>
    <subcellularLocation>
        <location evidence="2">Nucleus</location>
    </subcellularLocation>
    <subcellularLocation>
        <location evidence="2">Nucleus membrane</location>
    </subcellularLocation>
    <text evidence="2">Cytoplasmic when non-complexed. Forms a cyclin D-CDK4 complex in the cytoplasm as cells progress through G(1) phase. The complex accumulates on the nuclear membrane and enters the nucleus on transition from G(1) to S phase. Also present in nucleoli and heterochromatin lumps. Colocalizes with RB1 after release into the nucleus (By similarity).</text>
</comment>
<comment type="PTM">
    <text evidence="1">Phosphorylation at Thr-172 is required for enzymatic activity. Phosphorylated, in vitro, at this site by CCNH-CDK7, but, in vivo, appears to be phosphorylated by a proline-directed kinase. In the cyclin D-CDK4-CDKN1B complex, this phosphorylation and consequent CDK4 enzyme activity, is dependent on the tyrosine phosphorylation state of CDKN1B. Thus, in proliferating cells, CDK4 within the complex is phosphorylated on Thr-172 in the T-loop. In resting cells, phosphorylation on Thr-172 is prevented by the non-tyrosine-phosphorylated form of CDKN1B (By similarity).</text>
</comment>
<comment type="similarity">
    <text evidence="6">Belongs to the protein kinase superfamily. CMGC Ser/Thr protein kinase family. CDC2/CDKX subfamily.</text>
</comment>